<gene>
    <name evidence="1" type="primary">kdpA</name>
    <name type="ordered locus">BCAH820_0815</name>
</gene>
<dbReference type="EMBL" id="CP001283">
    <property type="protein sequence ID" value="ACK92424.1"/>
    <property type="molecule type" value="Genomic_DNA"/>
</dbReference>
<dbReference type="RefSeq" id="WP_000638356.1">
    <property type="nucleotide sequence ID" value="NC_011773.1"/>
</dbReference>
<dbReference type="SMR" id="B7JRB7"/>
<dbReference type="KEGG" id="bcu:BCAH820_0815"/>
<dbReference type="HOGENOM" id="CLU_018614_3_0_9"/>
<dbReference type="Proteomes" id="UP000001363">
    <property type="component" value="Chromosome"/>
</dbReference>
<dbReference type="GO" id="GO:0005886">
    <property type="term" value="C:plasma membrane"/>
    <property type="evidence" value="ECO:0007669"/>
    <property type="project" value="UniProtKB-SubCell"/>
</dbReference>
<dbReference type="GO" id="GO:0008556">
    <property type="term" value="F:P-type potassium transmembrane transporter activity"/>
    <property type="evidence" value="ECO:0007669"/>
    <property type="project" value="InterPro"/>
</dbReference>
<dbReference type="GO" id="GO:0030955">
    <property type="term" value="F:potassium ion binding"/>
    <property type="evidence" value="ECO:0007669"/>
    <property type="project" value="UniProtKB-UniRule"/>
</dbReference>
<dbReference type="HAMAP" id="MF_00275">
    <property type="entry name" value="KdpA"/>
    <property type="match status" value="1"/>
</dbReference>
<dbReference type="InterPro" id="IPR004623">
    <property type="entry name" value="KdpA"/>
</dbReference>
<dbReference type="NCBIfam" id="TIGR00680">
    <property type="entry name" value="kdpA"/>
    <property type="match status" value="1"/>
</dbReference>
<dbReference type="PANTHER" id="PTHR30607">
    <property type="entry name" value="POTASSIUM-TRANSPORTING ATPASE A CHAIN"/>
    <property type="match status" value="1"/>
</dbReference>
<dbReference type="PANTHER" id="PTHR30607:SF2">
    <property type="entry name" value="POTASSIUM-TRANSPORTING ATPASE POTASSIUM-BINDING SUBUNIT"/>
    <property type="match status" value="1"/>
</dbReference>
<dbReference type="Pfam" id="PF03814">
    <property type="entry name" value="KdpA"/>
    <property type="match status" value="1"/>
</dbReference>
<dbReference type="PIRSF" id="PIRSF001294">
    <property type="entry name" value="K_ATPaseA"/>
    <property type="match status" value="1"/>
</dbReference>
<comment type="function">
    <text evidence="1">Part of the high-affinity ATP-driven potassium transport (or Kdp) system, which catalyzes the hydrolysis of ATP coupled with the electrogenic transport of potassium into the cytoplasm. This subunit binds the extracellular potassium ions and delivers the ions to the membrane domain of KdpB through an intramembrane tunnel.</text>
</comment>
<comment type="subunit">
    <text evidence="1">The system is composed of three essential subunits: KdpA, KdpB and KdpC.</text>
</comment>
<comment type="subcellular location">
    <subcellularLocation>
        <location evidence="1">Cell membrane</location>
        <topology evidence="1">Multi-pass membrane protein</topology>
    </subcellularLocation>
</comment>
<comment type="similarity">
    <text evidence="1">Belongs to the KdpA family.</text>
</comment>
<reference key="1">
    <citation type="submission" date="2008-10" db="EMBL/GenBank/DDBJ databases">
        <title>Genome sequence of Bacillus cereus AH820.</title>
        <authorList>
            <person name="Dodson R.J."/>
            <person name="Durkin A.S."/>
            <person name="Rosovitz M.J."/>
            <person name="Rasko D.A."/>
            <person name="Hoffmaster A."/>
            <person name="Ravel J."/>
            <person name="Sutton G."/>
        </authorList>
    </citation>
    <scope>NUCLEOTIDE SEQUENCE [LARGE SCALE GENOMIC DNA]</scope>
    <source>
        <strain>AH820</strain>
    </source>
</reference>
<sequence length="555" mass="59813">MIWVAVVITMLLFILVAKPTGIYLEKAFQGSKKLDKVFGPFEKLIFKITGVKEYNQTWKQYALSLVLLNGFMIVVVYFIFRLQGVLPLNPAHIEGMEPTLAFNTAISFMTDTNLQHYSGENGLSYLSQLIGITFLMFAAPATTLALVMAFIRGLAGKELGNFFVDFTRALTRVFLPIAFVTALVFVALGVPQTLDGAVTAQTIDGVKQSIVRGPVASFVSIKELGNNGGGFFGTNSTHPFENPGQMSNILQMMLMMLLPTALPFTYGRMVGNKKQGRILFVSLFMVFLLGFITITTSELNGNPALNAMGIEHVQGSTEGKEVRFGTVFSSLYATVTTAAETGAVNTMHDTLTPIGGLVPLVNMMLNTVYGGVGAGFVNIIMYAIIAVFISGLMVGRTPEFLGKKIEGKEMKLIAVTILFHPLLILGFSALALSTSLGTDAISNLGFHGLTQVVYEYTSSAVNNGSGFEGLGDATTFWNITTGLVMFLGRYFSLVTMLAVAASLKEKTVVPETVGTFRTDNGLFGGIFIGTIVIVGALTFFPMLVLGPIAEFLTLK</sequence>
<name>KDPA_BACC0</name>
<organism>
    <name type="scientific">Bacillus cereus (strain AH820)</name>
    <dbReference type="NCBI Taxonomy" id="405535"/>
    <lineage>
        <taxon>Bacteria</taxon>
        <taxon>Bacillati</taxon>
        <taxon>Bacillota</taxon>
        <taxon>Bacilli</taxon>
        <taxon>Bacillales</taxon>
        <taxon>Bacillaceae</taxon>
        <taxon>Bacillus</taxon>
        <taxon>Bacillus cereus group</taxon>
    </lineage>
</organism>
<keyword id="KW-1003">Cell membrane</keyword>
<keyword id="KW-0406">Ion transport</keyword>
<keyword id="KW-0472">Membrane</keyword>
<keyword id="KW-0630">Potassium</keyword>
<keyword id="KW-0633">Potassium transport</keyword>
<keyword id="KW-0812">Transmembrane</keyword>
<keyword id="KW-1133">Transmembrane helix</keyword>
<keyword id="KW-0813">Transport</keyword>
<protein>
    <recommendedName>
        <fullName evidence="1">Potassium-transporting ATPase potassium-binding subunit</fullName>
    </recommendedName>
    <alternativeName>
        <fullName evidence="1">ATP phosphohydrolase [potassium-transporting] A chain</fullName>
    </alternativeName>
    <alternativeName>
        <fullName evidence="1">Potassium-binding and translocating subunit A</fullName>
    </alternativeName>
    <alternativeName>
        <fullName evidence="1">Potassium-translocating ATPase A chain</fullName>
    </alternativeName>
</protein>
<proteinExistence type="inferred from homology"/>
<evidence type="ECO:0000255" key="1">
    <source>
        <dbReference type="HAMAP-Rule" id="MF_00275"/>
    </source>
</evidence>
<feature type="chain" id="PRO_1000119330" description="Potassium-transporting ATPase potassium-binding subunit">
    <location>
        <begin position="1"/>
        <end position="555"/>
    </location>
</feature>
<feature type="transmembrane region" description="Helical" evidence="1">
    <location>
        <begin position="2"/>
        <end position="22"/>
    </location>
</feature>
<feature type="transmembrane region" description="Helical" evidence="1">
    <location>
        <begin position="60"/>
        <end position="80"/>
    </location>
</feature>
<feature type="transmembrane region" description="Helical" evidence="1">
    <location>
        <begin position="130"/>
        <end position="150"/>
    </location>
</feature>
<feature type="transmembrane region" description="Helical" evidence="1">
    <location>
        <begin position="173"/>
        <end position="193"/>
    </location>
</feature>
<feature type="transmembrane region" description="Helical" evidence="1">
    <location>
        <begin position="246"/>
        <end position="266"/>
    </location>
</feature>
<feature type="transmembrane region" description="Helical" evidence="1">
    <location>
        <begin position="278"/>
        <end position="298"/>
    </location>
</feature>
<feature type="transmembrane region" description="Helical" evidence="1">
    <location>
        <begin position="374"/>
        <end position="394"/>
    </location>
</feature>
<feature type="transmembrane region" description="Helical" evidence="1">
    <location>
        <begin position="412"/>
        <end position="432"/>
    </location>
</feature>
<feature type="transmembrane region" description="Helical" evidence="1">
    <location>
        <begin position="483"/>
        <end position="503"/>
    </location>
</feature>
<feature type="transmembrane region" description="Helical" evidence="1">
    <location>
        <begin position="525"/>
        <end position="545"/>
    </location>
</feature>
<accession>B7JRB7</accession>